<comment type="function">
    <text evidence="1">Scaffold protein in the commander complex that is essential for endosomal recycling of transmembrane cargos; the commander complex is composed of the CCC subcomplex and the retriever subcomplex (By similarity). May modulate activity of cullin-RING E3 ubiquitin ligase (CRL) complexes (By similarity). Down-regulates activation of NF-kappa-B (By similarity).</text>
</comment>
<comment type="subunit">
    <text evidence="1">Component of the commander complex consisting of the CCC subcomplex and the retriever subcomplex (By similarity). Component of the CCC (COMMD/CCDC22/CCDC93) subcomplex consisting of COMMD1, COMMD2, COMMD3, COMMD4, COMMD5, COMMD6, COMMD7, COMMD8, COMMD9, COMMD10, CCDC22 and CCDC93; within the complex forms a heterodimer with COMMD8 (By similarity). Interacts with RELA, RELB, NFKB1/p105. Interacts with CCDC22, CCDC93, SCNN1B, CUL2, CUL3, CUL4A, CUL5, CUL7 (By similarity).</text>
</comment>
<comment type="subcellular location">
    <subcellularLocation>
        <location evidence="1">Cytoplasm</location>
    </subcellularLocation>
    <subcellularLocation>
        <location evidence="1">Nucleus</location>
    </subcellularLocation>
</comment>
<comment type="similarity">
    <text evidence="3">Belongs to the COMM domain-containing protein 4 family.</text>
</comment>
<name>COMD4_MOUSE</name>
<evidence type="ECO:0000250" key="1">
    <source>
        <dbReference type="UniProtKB" id="Q9H0A8"/>
    </source>
</evidence>
<evidence type="ECO:0000255" key="2">
    <source>
        <dbReference type="PROSITE-ProRule" id="PRU00602"/>
    </source>
</evidence>
<evidence type="ECO:0000305" key="3"/>
<organism>
    <name type="scientific">Mus musculus</name>
    <name type="common">Mouse</name>
    <dbReference type="NCBI Taxonomy" id="10090"/>
    <lineage>
        <taxon>Eukaryota</taxon>
        <taxon>Metazoa</taxon>
        <taxon>Chordata</taxon>
        <taxon>Craniata</taxon>
        <taxon>Vertebrata</taxon>
        <taxon>Euteleostomi</taxon>
        <taxon>Mammalia</taxon>
        <taxon>Eutheria</taxon>
        <taxon>Euarchontoglires</taxon>
        <taxon>Glires</taxon>
        <taxon>Rodentia</taxon>
        <taxon>Myomorpha</taxon>
        <taxon>Muroidea</taxon>
        <taxon>Muridae</taxon>
        <taxon>Murinae</taxon>
        <taxon>Mus</taxon>
        <taxon>Mus</taxon>
    </lineage>
</organism>
<feature type="chain" id="PRO_0000077394" description="COMM domain-containing protein 4">
    <location>
        <begin position="1"/>
        <end position="199"/>
    </location>
</feature>
<feature type="domain" description="COMM" evidence="2">
    <location>
        <begin position="130"/>
        <end position="199"/>
    </location>
</feature>
<gene>
    <name type="primary">Commd4</name>
</gene>
<dbReference type="EMBL" id="AK009802">
    <property type="protein sequence ID" value="BAB26512.1"/>
    <property type="molecule type" value="mRNA"/>
</dbReference>
<dbReference type="EMBL" id="AK004174">
    <property type="protein sequence ID" value="BAB23207.1"/>
    <property type="molecule type" value="mRNA"/>
</dbReference>
<dbReference type="EMBL" id="BC033438">
    <property type="protein sequence ID" value="AAH33438.1"/>
    <property type="molecule type" value="mRNA"/>
</dbReference>
<dbReference type="EMBL" id="BC049222">
    <property type="protein sequence ID" value="AAH49222.1"/>
    <property type="molecule type" value="mRNA"/>
</dbReference>
<dbReference type="CCDS" id="CCDS40647.1"/>
<dbReference type="RefSeq" id="NP_079693.1">
    <property type="nucleotide sequence ID" value="NM_025417.2"/>
</dbReference>
<dbReference type="SMR" id="Q9CQ02"/>
<dbReference type="BioGRID" id="211291">
    <property type="interactions" value="3"/>
</dbReference>
<dbReference type="FunCoup" id="Q9CQ02">
    <property type="interactions" value="4299"/>
</dbReference>
<dbReference type="STRING" id="10090.ENSMUSP00000069078"/>
<dbReference type="iPTMnet" id="Q9CQ02"/>
<dbReference type="PhosphoSitePlus" id="Q9CQ02"/>
<dbReference type="SwissPalm" id="Q9CQ02"/>
<dbReference type="jPOST" id="Q9CQ02"/>
<dbReference type="PaxDb" id="10090-ENSMUSP00000069078"/>
<dbReference type="PeptideAtlas" id="Q9CQ02"/>
<dbReference type="ProteomicsDB" id="283603"/>
<dbReference type="Pumba" id="Q9CQ02"/>
<dbReference type="Antibodypedia" id="55565">
    <property type="antibodies" value="95 antibodies from 17 providers"/>
</dbReference>
<dbReference type="DNASU" id="66199"/>
<dbReference type="Ensembl" id="ENSMUST00000065358.9">
    <property type="protein sequence ID" value="ENSMUSP00000069078.8"/>
    <property type="gene ID" value="ENSMUSG00000032299.11"/>
</dbReference>
<dbReference type="GeneID" id="66199"/>
<dbReference type="KEGG" id="mmu:66199"/>
<dbReference type="UCSC" id="uc009pul.1">
    <property type="organism name" value="mouse"/>
</dbReference>
<dbReference type="AGR" id="MGI:1913449"/>
<dbReference type="CTD" id="54939"/>
<dbReference type="MGI" id="MGI:1913449">
    <property type="gene designation" value="Commd4"/>
</dbReference>
<dbReference type="VEuPathDB" id="HostDB:ENSMUSG00000032299"/>
<dbReference type="eggNOG" id="ENOG502QSP3">
    <property type="taxonomic scope" value="Eukaryota"/>
</dbReference>
<dbReference type="GeneTree" id="ENSGT00390000015516"/>
<dbReference type="HOGENOM" id="CLU_095496_0_0_1"/>
<dbReference type="InParanoid" id="Q9CQ02"/>
<dbReference type="OMA" id="RDCPDWL"/>
<dbReference type="OrthoDB" id="71356at9989"/>
<dbReference type="PhylomeDB" id="Q9CQ02"/>
<dbReference type="TreeFam" id="TF317482"/>
<dbReference type="Reactome" id="R-MMU-8951664">
    <property type="pathway name" value="Neddylation"/>
</dbReference>
<dbReference type="BioGRID-ORCS" id="66199">
    <property type="hits" value="9 hits in 79 CRISPR screens"/>
</dbReference>
<dbReference type="ChiTaRS" id="Commd4">
    <property type="organism name" value="mouse"/>
</dbReference>
<dbReference type="PRO" id="PR:Q9CQ02"/>
<dbReference type="Proteomes" id="UP000000589">
    <property type="component" value="Chromosome 9"/>
</dbReference>
<dbReference type="RNAct" id="Q9CQ02">
    <property type="molecule type" value="protein"/>
</dbReference>
<dbReference type="Bgee" id="ENSMUSG00000032299">
    <property type="expression patterns" value="Expressed in yolk sac and 270 other cell types or tissues"/>
</dbReference>
<dbReference type="ExpressionAtlas" id="Q9CQ02">
    <property type="expression patterns" value="baseline and differential"/>
</dbReference>
<dbReference type="GO" id="GO:0005829">
    <property type="term" value="C:cytosol"/>
    <property type="evidence" value="ECO:0007669"/>
    <property type="project" value="Ensembl"/>
</dbReference>
<dbReference type="GO" id="GO:0005634">
    <property type="term" value="C:nucleus"/>
    <property type="evidence" value="ECO:0007669"/>
    <property type="project" value="UniProtKB-SubCell"/>
</dbReference>
<dbReference type="GO" id="GO:0005886">
    <property type="term" value="C:plasma membrane"/>
    <property type="evidence" value="ECO:0007669"/>
    <property type="project" value="Ensembl"/>
</dbReference>
<dbReference type="CDD" id="cd04752">
    <property type="entry name" value="Commd4"/>
    <property type="match status" value="1"/>
</dbReference>
<dbReference type="InterPro" id="IPR017920">
    <property type="entry name" value="COMM"/>
</dbReference>
<dbReference type="InterPro" id="IPR037356">
    <property type="entry name" value="COMMD4"/>
</dbReference>
<dbReference type="InterPro" id="IPR047155">
    <property type="entry name" value="COMMD4/6/7/8"/>
</dbReference>
<dbReference type="PANTHER" id="PTHR16231:SF4">
    <property type="entry name" value="COMM DOMAIN-CONTAINING PROTEIN 4"/>
    <property type="match status" value="1"/>
</dbReference>
<dbReference type="PANTHER" id="PTHR16231">
    <property type="entry name" value="COMM DOMAIN-CONTAINING PROTEIN 4-8 FAMILY MEMBER"/>
    <property type="match status" value="1"/>
</dbReference>
<dbReference type="Pfam" id="PF07258">
    <property type="entry name" value="COMM_domain"/>
    <property type="match status" value="1"/>
</dbReference>
<dbReference type="Pfam" id="PF21672">
    <property type="entry name" value="COMM_HN"/>
    <property type="match status" value="1"/>
</dbReference>
<dbReference type="PROSITE" id="PS51269">
    <property type="entry name" value="COMM"/>
    <property type="match status" value="1"/>
</dbReference>
<reference key="1">
    <citation type="journal article" date="2005" name="Science">
        <title>The transcriptional landscape of the mammalian genome.</title>
        <authorList>
            <person name="Carninci P."/>
            <person name="Kasukawa T."/>
            <person name="Katayama S."/>
            <person name="Gough J."/>
            <person name="Frith M.C."/>
            <person name="Maeda N."/>
            <person name="Oyama R."/>
            <person name="Ravasi T."/>
            <person name="Lenhard B."/>
            <person name="Wells C."/>
            <person name="Kodzius R."/>
            <person name="Shimokawa K."/>
            <person name="Bajic V.B."/>
            <person name="Brenner S.E."/>
            <person name="Batalov S."/>
            <person name="Forrest A.R."/>
            <person name="Zavolan M."/>
            <person name="Davis M.J."/>
            <person name="Wilming L.G."/>
            <person name="Aidinis V."/>
            <person name="Allen J.E."/>
            <person name="Ambesi-Impiombato A."/>
            <person name="Apweiler R."/>
            <person name="Aturaliya R.N."/>
            <person name="Bailey T.L."/>
            <person name="Bansal M."/>
            <person name="Baxter L."/>
            <person name="Beisel K.W."/>
            <person name="Bersano T."/>
            <person name="Bono H."/>
            <person name="Chalk A.M."/>
            <person name="Chiu K.P."/>
            <person name="Choudhary V."/>
            <person name="Christoffels A."/>
            <person name="Clutterbuck D.R."/>
            <person name="Crowe M.L."/>
            <person name="Dalla E."/>
            <person name="Dalrymple B.P."/>
            <person name="de Bono B."/>
            <person name="Della Gatta G."/>
            <person name="di Bernardo D."/>
            <person name="Down T."/>
            <person name="Engstrom P."/>
            <person name="Fagiolini M."/>
            <person name="Faulkner G."/>
            <person name="Fletcher C.F."/>
            <person name="Fukushima T."/>
            <person name="Furuno M."/>
            <person name="Futaki S."/>
            <person name="Gariboldi M."/>
            <person name="Georgii-Hemming P."/>
            <person name="Gingeras T.R."/>
            <person name="Gojobori T."/>
            <person name="Green R.E."/>
            <person name="Gustincich S."/>
            <person name="Harbers M."/>
            <person name="Hayashi Y."/>
            <person name="Hensch T.K."/>
            <person name="Hirokawa N."/>
            <person name="Hill D."/>
            <person name="Huminiecki L."/>
            <person name="Iacono M."/>
            <person name="Ikeo K."/>
            <person name="Iwama A."/>
            <person name="Ishikawa T."/>
            <person name="Jakt M."/>
            <person name="Kanapin A."/>
            <person name="Katoh M."/>
            <person name="Kawasawa Y."/>
            <person name="Kelso J."/>
            <person name="Kitamura H."/>
            <person name="Kitano H."/>
            <person name="Kollias G."/>
            <person name="Krishnan S.P."/>
            <person name="Kruger A."/>
            <person name="Kummerfeld S.K."/>
            <person name="Kurochkin I.V."/>
            <person name="Lareau L.F."/>
            <person name="Lazarevic D."/>
            <person name="Lipovich L."/>
            <person name="Liu J."/>
            <person name="Liuni S."/>
            <person name="McWilliam S."/>
            <person name="Madan Babu M."/>
            <person name="Madera M."/>
            <person name="Marchionni L."/>
            <person name="Matsuda H."/>
            <person name="Matsuzawa S."/>
            <person name="Miki H."/>
            <person name="Mignone F."/>
            <person name="Miyake S."/>
            <person name="Morris K."/>
            <person name="Mottagui-Tabar S."/>
            <person name="Mulder N."/>
            <person name="Nakano N."/>
            <person name="Nakauchi H."/>
            <person name="Ng P."/>
            <person name="Nilsson R."/>
            <person name="Nishiguchi S."/>
            <person name="Nishikawa S."/>
            <person name="Nori F."/>
            <person name="Ohara O."/>
            <person name="Okazaki Y."/>
            <person name="Orlando V."/>
            <person name="Pang K.C."/>
            <person name="Pavan W.J."/>
            <person name="Pavesi G."/>
            <person name="Pesole G."/>
            <person name="Petrovsky N."/>
            <person name="Piazza S."/>
            <person name="Reed J."/>
            <person name="Reid J.F."/>
            <person name="Ring B.Z."/>
            <person name="Ringwald M."/>
            <person name="Rost B."/>
            <person name="Ruan Y."/>
            <person name="Salzberg S.L."/>
            <person name="Sandelin A."/>
            <person name="Schneider C."/>
            <person name="Schoenbach C."/>
            <person name="Sekiguchi K."/>
            <person name="Semple C.A."/>
            <person name="Seno S."/>
            <person name="Sessa L."/>
            <person name="Sheng Y."/>
            <person name="Shibata Y."/>
            <person name="Shimada H."/>
            <person name="Shimada K."/>
            <person name="Silva D."/>
            <person name="Sinclair B."/>
            <person name="Sperling S."/>
            <person name="Stupka E."/>
            <person name="Sugiura K."/>
            <person name="Sultana R."/>
            <person name="Takenaka Y."/>
            <person name="Taki K."/>
            <person name="Tammoja K."/>
            <person name="Tan S.L."/>
            <person name="Tang S."/>
            <person name="Taylor M.S."/>
            <person name="Tegner J."/>
            <person name="Teichmann S.A."/>
            <person name="Ueda H.R."/>
            <person name="van Nimwegen E."/>
            <person name="Verardo R."/>
            <person name="Wei C.L."/>
            <person name="Yagi K."/>
            <person name="Yamanishi H."/>
            <person name="Zabarovsky E."/>
            <person name="Zhu S."/>
            <person name="Zimmer A."/>
            <person name="Hide W."/>
            <person name="Bult C."/>
            <person name="Grimmond S.M."/>
            <person name="Teasdale R.D."/>
            <person name="Liu E.T."/>
            <person name="Brusic V."/>
            <person name="Quackenbush J."/>
            <person name="Wahlestedt C."/>
            <person name="Mattick J.S."/>
            <person name="Hume D.A."/>
            <person name="Kai C."/>
            <person name="Sasaki D."/>
            <person name="Tomaru Y."/>
            <person name="Fukuda S."/>
            <person name="Kanamori-Katayama M."/>
            <person name="Suzuki M."/>
            <person name="Aoki J."/>
            <person name="Arakawa T."/>
            <person name="Iida J."/>
            <person name="Imamura K."/>
            <person name="Itoh M."/>
            <person name="Kato T."/>
            <person name="Kawaji H."/>
            <person name="Kawagashira N."/>
            <person name="Kawashima T."/>
            <person name="Kojima M."/>
            <person name="Kondo S."/>
            <person name="Konno H."/>
            <person name="Nakano K."/>
            <person name="Ninomiya N."/>
            <person name="Nishio T."/>
            <person name="Okada M."/>
            <person name="Plessy C."/>
            <person name="Shibata K."/>
            <person name="Shiraki T."/>
            <person name="Suzuki S."/>
            <person name="Tagami M."/>
            <person name="Waki K."/>
            <person name="Watahiki A."/>
            <person name="Okamura-Oho Y."/>
            <person name="Suzuki H."/>
            <person name="Kawai J."/>
            <person name="Hayashizaki Y."/>
        </authorList>
    </citation>
    <scope>NUCLEOTIDE SEQUENCE [LARGE SCALE MRNA]</scope>
    <source>
        <strain>C57BL/6J</strain>
        <tissue>Tongue</tissue>
    </source>
</reference>
<reference key="2">
    <citation type="journal article" date="2004" name="Genome Res.">
        <title>The status, quality, and expansion of the NIH full-length cDNA project: the Mammalian Gene Collection (MGC).</title>
        <authorList>
            <consortium name="The MGC Project Team"/>
        </authorList>
    </citation>
    <scope>NUCLEOTIDE SEQUENCE [LARGE SCALE MRNA]</scope>
    <source>
        <strain>129</strain>
        <tissue>Mammary tumor</tissue>
    </source>
</reference>
<reference key="3">
    <citation type="journal article" date="2010" name="Cell">
        <title>A tissue-specific atlas of mouse protein phosphorylation and expression.</title>
        <authorList>
            <person name="Huttlin E.L."/>
            <person name="Jedrychowski M.P."/>
            <person name="Elias J.E."/>
            <person name="Goswami T."/>
            <person name="Rad R."/>
            <person name="Beausoleil S.A."/>
            <person name="Villen J."/>
            <person name="Haas W."/>
            <person name="Sowa M.E."/>
            <person name="Gygi S.P."/>
        </authorList>
    </citation>
    <scope>IDENTIFICATION BY MASS SPECTROMETRY [LARGE SCALE ANALYSIS]</scope>
    <source>
        <tissue>Brain</tissue>
        <tissue>Brown adipose tissue</tissue>
        <tissue>Kidney</tissue>
        <tissue>Liver</tissue>
        <tissue>Lung</tissue>
        <tissue>Pancreas</tissue>
        <tissue>Spleen</tissue>
        <tissue>Testis</tissue>
    </source>
</reference>
<protein>
    <recommendedName>
        <fullName>COMM domain-containing protein 4</fullName>
    </recommendedName>
</protein>
<proteinExistence type="evidence at protein level"/>
<accession>Q9CQ02</accession>
<sequence>MRFRFCGDLDCPDWVLAEISTLAKISSVKLRLLCSQVLKELLGQGIDYEKILKLTADAKFESGDVKATVAVLSFILSSAAKHSVDSDSLSSELQQLGLPKEHATSLCRCYEEKQSPLQEHLRACSLRVNRLASVGWRVDYTLSSSLLHSVEEPMVHLQLQVVPAPGTQAQPVSMSLSADKFQVLLAELKQAQTMMTALG</sequence>
<keyword id="KW-0963">Cytoplasm</keyword>
<keyword id="KW-0539">Nucleus</keyword>
<keyword id="KW-1185">Reference proteome</keyword>
<keyword id="KW-0804">Transcription</keyword>
<keyword id="KW-0805">Transcription regulation</keyword>
<keyword id="KW-0833">Ubl conjugation pathway</keyword>